<name>GYRB_HAEIN</name>
<evidence type="ECO:0000255" key="1">
    <source>
        <dbReference type="HAMAP-Rule" id="MF_01898"/>
    </source>
</evidence>
<dbReference type="EC" id="5.6.2.2" evidence="1"/>
<dbReference type="EMBL" id="L42023">
    <property type="protein sequence ID" value="AAC22225.1"/>
    <property type="molecule type" value="Genomic_DNA"/>
</dbReference>
<dbReference type="PIR" id="A64078">
    <property type="entry name" value="A64078"/>
</dbReference>
<dbReference type="RefSeq" id="NP_438724.1">
    <property type="nucleotide sequence ID" value="NC_000907.1"/>
</dbReference>
<dbReference type="SMR" id="P43701"/>
<dbReference type="STRING" id="71421.HI_0567"/>
<dbReference type="EnsemblBacteria" id="AAC22225">
    <property type="protein sequence ID" value="AAC22225"/>
    <property type="gene ID" value="HI_0567"/>
</dbReference>
<dbReference type="KEGG" id="hin:HI_0567"/>
<dbReference type="PATRIC" id="fig|71421.8.peg.587"/>
<dbReference type="eggNOG" id="COG0187">
    <property type="taxonomic scope" value="Bacteria"/>
</dbReference>
<dbReference type="HOGENOM" id="CLU_006146_4_1_6"/>
<dbReference type="OrthoDB" id="9802808at2"/>
<dbReference type="PhylomeDB" id="P43701"/>
<dbReference type="BioCyc" id="HINF71421:G1GJ1-579-MONOMER"/>
<dbReference type="Proteomes" id="UP000000579">
    <property type="component" value="Chromosome"/>
</dbReference>
<dbReference type="GO" id="GO:0005694">
    <property type="term" value="C:chromosome"/>
    <property type="evidence" value="ECO:0007669"/>
    <property type="project" value="InterPro"/>
</dbReference>
<dbReference type="GO" id="GO:0005737">
    <property type="term" value="C:cytoplasm"/>
    <property type="evidence" value="ECO:0007669"/>
    <property type="project" value="UniProtKB-SubCell"/>
</dbReference>
<dbReference type="GO" id="GO:0005524">
    <property type="term" value="F:ATP binding"/>
    <property type="evidence" value="ECO:0007669"/>
    <property type="project" value="UniProtKB-UniRule"/>
</dbReference>
<dbReference type="GO" id="GO:0003677">
    <property type="term" value="F:DNA binding"/>
    <property type="evidence" value="ECO:0007669"/>
    <property type="project" value="UniProtKB-KW"/>
</dbReference>
<dbReference type="GO" id="GO:0003918">
    <property type="term" value="F:DNA topoisomerase type II (double strand cut, ATP-hydrolyzing) activity"/>
    <property type="evidence" value="ECO:0000318"/>
    <property type="project" value="GO_Central"/>
</dbReference>
<dbReference type="GO" id="GO:0046872">
    <property type="term" value="F:metal ion binding"/>
    <property type="evidence" value="ECO:0007669"/>
    <property type="project" value="UniProtKB-KW"/>
</dbReference>
<dbReference type="GO" id="GO:0006265">
    <property type="term" value="P:DNA topological change"/>
    <property type="evidence" value="ECO:0000318"/>
    <property type="project" value="GO_Central"/>
</dbReference>
<dbReference type="GO" id="GO:0006261">
    <property type="term" value="P:DNA-templated DNA replication"/>
    <property type="evidence" value="ECO:0007669"/>
    <property type="project" value="UniProtKB-UniRule"/>
</dbReference>
<dbReference type="CDD" id="cd16928">
    <property type="entry name" value="HATPase_GyrB-like"/>
    <property type="match status" value="1"/>
</dbReference>
<dbReference type="CDD" id="cd00822">
    <property type="entry name" value="TopoII_Trans_DNA_gyrase"/>
    <property type="match status" value="1"/>
</dbReference>
<dbReference type="CDD" id="cd03366">
    <property type="entry name" value="TOPRIM_TopoIIA_GyrB"/>
    <property type="match status" value="1"/>
</dbReference>
<dbReference type="FunFam" id="3.10.20.690:FF:000002">
    <property type="entry name" value="DNA gyrase subunit B"/>
    <property type="match status" value="1"/>
</dbReference>
<dbReference type="FunFam" id="3.30.230.10:FF:000005">
    <property type="entry name" value="DNA gyrase subunit B"/>
    <property type="match status" value="1"/>
</dbReference>
<dbReference type="FunFam" id="3.30.565.10:FF:000002">
    <property type="entry name" value="DNA gyrase subunit B"/>
    <property type="match status" value="1"/>
</dbReference>
<dbReference type="FunFam" id="3.40.50.670:FF:000004">
    <property type="entry name" value="DNA gyrase subunit B"/>
    <property type="match status" value="1"/>
</dbReference>
<dbReference type="FunFam" id="3.40.50.670:FF:000005">
    <property type="entry name" value="DNA gyrase subunit B"/>
    <property type="match status" value="1"/>
</dbReference>
<dbReference type="Gene3D" id="3.10.20.690">
    <property type="match status" value="1"/>
</dbReference>
<dbReference type="Gene3D" id="3.30.230.10">
    <property type="match status" value="1"/>
</dbReference>
<dbReference type="Gene3D" id="3.40.50.670">
    <property type="match status" value="2"/>
</dbReference>
<dbReference type="Gene3D" id="3.30.565.10">
    <property type="entry name" value="Histidine kinase-like ATPase, C-terminal domain"/>
    <property type="match status" value="1"/>
</dbReference>
<dbReference type="HAMAP" id="MF_01898">
    <property type="entry name" value="GyrB"/>
    <property type="match status" value="1"/>
</dbReference>
<dbReference type="InterPro" id="IPR002288">
    <property type="entry name" value="DNA_gyrase_B_C"/>
</dbReference>
<dbReference type="InterPro" id="IPR011557">
    <property type="entry name" value="GyrB"/>
</dbReference>
<dbReference type="InterPro" id="IPR049353">
    <property type="entry name" value="GyrB_hook"/>
</dbReference>
<dbReference type="InterPro" id="IPR041423">
    <property type="entry name" value="GyrB_insert"/>
</dbReference>
<dbReference type="InterPro" id="IPR036890">
    <property type="entry name" value="HATPase_C_sf"/>
</dbReference>
<dbReference type="InterPro" id="IPR020568">
    <property type="entry name" value="Ribosomal_Su5_D2-typ_SF"/>
</dbReference>
<dbReference type="InterPro" id="IPR014721">
    <property type="entry name" value="Ribsml_uS5_D2-typ_fold_subgr"/>
</dbReference>
<dbReference type="InterPro" id="IPR001241">
    <property type="entry name" value="Topo_IIA"/>
</dbReference>
<dbReference type="InterPro" id="IPR013760">
    <property type="entry name" value="Topo_IIA-like_dom_sf"/>
</dbReference>
<dbReference type="InterPro" id="IPR000565">
    <property type="entry name" value="Topo_IIA_B"/>
</dbReference>
<dbReference type="InterPro" id="IPR013759">
    <property type="entry name" value="Topo_IIA_B_C"/>
</dbReference>
<dbReference type="InterPro" id="IPR013506">
    <property type="entry name" value="Topo_IIA_bsu_dom2"/>
</dbReference>
<dbReference type="InterPro" id="IPR018522">
    <property type="entry name" value="TopoIIA_CS"/>
</dbReference>
<dbReference type="InterPro" id="IPR006171">
    <property type="entry name" value="TOPRIM_dom"/>
</dbReference>
<dbReference type="InterPro" id="IPR034160">
    <property type="entry name" value="TOPRIM_GyrB"/>
</dbReference>
<dbReference type="NCBIfam" id="TIGR01059">
    <property type="entry name" value="gyrB"/>
    <property type="match status" value="1"/>
</dbReference>
<dbReference type="NCBIfam" id="NF004189">
    <property type="entry name" value="PRK05644.1"/>
    <property type="match status" value="1"/>
</dbReference>
<dbReference type="NCBIfam" id="NF011501">
    <property type="entry name" value="PRK14939.1"/>
    <property type="match status" value="1"/>
</dbReference>
<dbReference type="PANTHER" id="PTHR45866:SF1">
    <property type="entry name" value="DNA GYRASE SUBUNIT B, MITOCHONDRIAL"/>
    <property type="match status" value="1"/>
</dbReference>
<dbReference type="PANTHER" id="PTHR45866">
    <property type="entry name" value="DNA GYRASE/TOPOISOMERASE SUBUNIT B"/>
    <property type="match status" value="1"/>
</dbReference>
<dbReference type="Pfam" id="PF00204">
    <property type="entry name" value="DNA_gyraseB"/>
    <property type="match status" value="1"/>
</dbReference>
<dbReference type="Pfam" id="PF00986">
    <property type="entry name" value="DNA_gyraseB_C"/>
    <property type="match status" value="1"/>
</dbReference>
<dbReference type="Pfam" id="PF21249">
    <property type="entry name" value="GyrB_hook"/>
    <property type="match status" value="1"/>
</dbReference>
<dbReference type="Pfam" id="PF18053">
    <property type="entry name" value="GyrB_insert"/>
    <property type="match status" value="1"/>
</dbReference>
<dbReference type="Pfam" id="PF02518">
    <property type="entry name" value="HATPase_c"/>
    <property type="match status" value="1"/>
</dbReference>
<dbReference type="Pfam" id="PF01751">
    <property type="entry name" value="Toprim"/>
    <property type="match status" value="1"/>
</dbReference>
<dbReference type="PRINTS" id="PR01159">
    <property type="entry name" value="DNAGYRASEB"/>
</dbReference>
<dbReference type="PRINTS" id="PR00418">
    <property type="entry name" value="TPI2FAMILY"/>
</dbReference>
<dbReference type="SMART" id="SM00387">
    <property type="entry name" value="HATPase_c"/>
    <property type="match status" value="1"/>
</dbReference>
<dbReference type="SMART" id="SM00433">
    <property type="entry name" value="TOP2c"/>
    <property type="match status" value="1"/>
</dbReference>
<dbReference type="SUPFAM" id="SSF55874">
    <property type="entry name" value="ATPase domain of HSP90 chaperone/DNA topoisomerase II/histidine kinase"/>
    <property type="match status" value="1"/>
</dbReference>
<dbReference type="SUPFAM" id="SSF54211">
    <property type="entry name" value="Ribosomal protein S5 domain 2-like"/>
    <property type="match status" value="1"/>
</dbReference>
<dbReference type="SUPFAM" id="SSF56719">
    <property type="entry name" value="Type II DNA topoisomerase"/>
    <property type="match status" value="1"/>
</dbReference>
<dbReference type="PROSITE" id="PS00177">
    <property type="entry name" value="TOPOISOMERASE_II"/>
    <property type="match status" value="1"/>
</dbReference>
<dbReference type="PROSITE" id="PS50880">
    <property type="entry name" value="TOPRIM"/>
    <property type="match status" value="1"/>
</dbReference>
<gene>
    <name evidence="1" type="primary">gyrB</name>
    <name type="ordered locus">HI_0567</name>
</gene>
<proteinExistence type="inferred from homology"/>
<accession>P43701</accession>
<protein>
    <recommendedName>
        <fullName evidence="1">DNA gyrase subunit B</fullName>
        <ecNumber evidence="1">5.6.2.2</ecNumber>
    </recommendedName>
</protein>
<comment type="function">
    <text evidence="1">A type II topoisomerase that negatively supercoils closed circular double-stranded (ds) DNA in an ATP-dependent manner to modulate DNA topology and maintain chromosomes in an underwound state. Negative supercoiling favors strand separation, and DNA replication, transcription, recombination and repair, all of which involve strand separation. Also able to catalyze the interconversion of other topological isomers of dsDNA rings, including catenanes and knotted rings. Type II topoisomerases break and join 2 DNA strands simultaneously in an ATP-dependent manner.</text>
</comment>
<comment type="catalytic activity">
    <reaction evidence="1">
        <text>ATP-dependent breakage, passage and rejoining of double-stranded DNA.</text>
        <dbReference type="EC" id="5.6.2.2"/>
    </reaction>
</comment>
<comment type="cofactor">
    <cofactor evidence="1">
        <name>Mg(2+)</name>
        <dbReference type="ChEBI" id="CHEBI:18420"/>
    </cofactor>
    <cofactor evidence="1">
        <name>Mn(2+)</name>
        <dbReference type="ChEBI" id="CHEBI:29035"/>
    </cofactor>
    <cofactor evidence="1">
        <name>Ca(2+)</name>
        <dbReference type="ChEBI" id="CHEBI:29108"/>
    </cofactor>
    <text evidence="1">Binds two Mg(2+) per subunit. The magnesium ions form salt bridges with both the protein and the DNA. Can also accept other divalent metal cations, such as Mn(2+) or Ca(2+).</text>
</comment>
<comment type="subunit">
    <text evidence="1">Heterotetramer, composed of two GyrA and two GyrB chains. In the heterotetramer, GyrA contains the active site tyrosine that forms a transient covalent intermediate with DNA, while GyrB binds cofactors and catalyzes ATP hydrolysis.</text>
</comment>
<comment type="subcellular location">
    <subcellularLocation>
        <location evidence="1">Cytoplasm</location>
    </subcellularLocation>
</comment>
<comment type="miscellaneous">
    <text evidence="1">Few gyrases are as efficient as E.coli at forming negative supercoils. Not all organisms have 2 type II topoisomerases; in organisms with a single type II topoisomerase this enzyme also has to decatenate newly replicated chromosomes.</text>
</comment>
<comment type="similarity">
    <text evidence="1">Belongs to the type II topoisomerase GyrB family.</text>
</comment>
<feature type="chain" id="PRO_0000145313" description="DNA gyrase subunit B">
    <location>
        <begin position="1"/>
        <end position="806"/>
    </location>
</feature>
<feature type="domain" description="Toprim" evidence="1">
    <location>
        <begin position="421"/>
        <end position="536"/>
    </location>
</feature>
<feature type="binding site" evidence="1">
    <location>
        <position position="427"/>
    </location>
    <ligand>
        <name>Mg(2+)</name>
        <dbReference type="ChEBI" id="CHEBI:18420"/>
        <label>1</label>
        <note>catalytic</note>
    </ligand>
</feature>
<feature type="binding site" evidence="1">
    <location>
        <position position="501"/>
    </location>
    <ligand>
        <name>Mg(2+)</name>
        <dbReference type="ChEBI" id="CHEBI:18420"/>
        <label>1</label>
        <note>catalytic</note>
    </ligand>
</feature>
<feature type="binding site" evidence="1">
    <location>
        <position position="501"/>
    </location>
    <ligand>
        <name>Mg(2+)</name>
        <dbReference type="ChEBI" id="CHEBI:18420"/>
        <label>2</label>
    </ligand>
</feature>
<feature type="binding site" evidence="1">
    <location>
        <position position="503"/>
    </location>
    <ligand>
        <name>Mg(2+)</name>
        <dbReference type="ChEBI" id="CHEBI:18420"/>
        <label>2</label>
    </ligand>
</feature>
<feature type="site" description="Interaction with DNA" evidence="1">
    <location>
        <position position="452"/>
    </location>
</feature>
<feature type="site" description="Interaction with DNA" evidence="1">
    <location>
        <position position="455"/>
    </location>
</feature>
<organism>
    <name type="scientific">Haemophilus influenzae (strain ATCC 51907 / DSM 11121 / KW20 / Rd)</name>
    <dbReference type="NCBI Taxonomy" id="71421"/>
    <lineage>
        <taxon>Bacteria</taxon>
        <taxon>Pseudomonadati</taxon>
        <taxon>Pseudomonadota</taxon>
        <taxon>Gammaproteobacteria</taxon>
        <taxon>Pasteurellales</taxon>
        <taxon>Pasteurellaceae</taxon>
        <taxon>Haemophilus</taxon>
    </lineage>
</organism>
<reference key="1">
    <citation type="journal article" date="1995" name="Science">
        <title>Whole-genome random sequencing and assembly of Haemophilus influenzae Rd.</title>
        <authorList>
            <person name="Fleischmann R.D."/>
            <person name="Adams M.D."/>
            <person name="White O."/>
            <person name="Clayton R.A."/>
            <person name="Kirkness E.F."/>
            <person name="Kerlavage A.R."/>
            <person name="Bult C.J."/>
            <person name="Tomb J.-F."/>
            <person name="Dougherty B.A."/>
            <person name="Merrick J.M."/>
            <person name="McKenney K."/>
            <person name="Sutton G.G."/>
            <person name="FitzHugh W."/>
            <person name="Fields C.A."/>
            <person name="Gocayne J.D."/>
            <person name="Scott J.D."/>
            <person name="Shirley R."/>
            <person name="Liu L.-I."/>
            <person name="Glodek A."/>
            <person name="Kelley J.M."/>
            <person name="Weidman J.F."/>
            <person name="Phillips C.A."/>
            <person name="Spriggs T."/>
            <person name="Hedblom E."/>
            <person name="Cotton M.D."/>
            <person name="Utterback T.R."/>
            <person name="Hanna M.C."/>
            <person name="Nguyen D.T."/>
            <person name="Saudek D.M."/>
            <person name="Brandon R.C."/>
            <person name="Fine L.D."/>
            <person name="Fritchman J.L."/>
            <person name="Fuhrmann J.L."/>
            <person name="Geoghagen N.S.M."/>
            <person name="Gnehm C.L."/>
            <person name="McDonald L.A."/>
            <person name="Small K.V."/>
            <person name="Fraser C.M."/>
            <person name="Smith H.O."/>
            <person name="Venter J.C."/>
        </authorList>
    </citation>
    <scope>NUCLEOTIDE SEQUENCE [LARGE SCALE GENOMIC DNA]</scope>
    <source>
        <strain>ATCC 51907 / DSM 11121 / KW20 / Rd</strain>
    </source>
</reference>
<keyword id="KW-0067">ATP-binding</keyword>
<keyword id="KW-0963">Cytoplasm</keyword>
<keyword id="KW-0238">DNA-binding</keyword>
<keyword id="KW-0413">Isomerase</keyword>
<keyword id="KW-0460">Magnesium</keyword>
<keyword id="KW-0479">Metal-binding</keyword>
<keyword id="KW-0547">Nucleotide-binding</keyword>
<keyword id="KW-1185">Reference proteome</keyword>
<keyword id="KW-0799">Topoisomerase</keyword>
<sequence>MSETTNDNYGASSIKVLKGLDAVRKRPGMYIGDTDDGTGLHHMVFEVVDNAIDEALAGHCSDIIVTIHDDNSVSVQDDGGGIPVDIHPEEGVSAAEVIMTVLHAGGKFDDNSYKVSGGLHGVGVSVVNALSDKLQLTIRRQGHVHEQFYHLGEPQSPLTVIGETEATGTTVRFWPSSDIFAITTFDYKILAKRLRELSFLNSGVSIRLIDKRDGSEDHFHYEGGIQAFVEYLNKNKNPIHPKPFYFTAEKDGIGVEVALQWNDGVNENVYCFTNNIPQRDGGTHLAGFRGALTRSLNSYMENEGMLKKEKVATSGDDAREGLVAIISVKVPDPKFSSQTKDKLVSSEVKSAVESAMNEKMQEYLLENPADAKIIVNQIIMAARAREAARKAREMTRRKGALDIAGLPGKLADCQEKDPALSELYLVEGDSAGGSAKVGRDRKTQAILPLKGKILNVEKARFDKMLSSQEVGTLITALGCGIGRDEYNPDKLRYHHIIIMTDADVDGSHIRTLLLTFFYRQMPELIERGYVYIAQPPLYKVKKGKQERYIKDADEMEQYELTLALDGAELHISTNAPAMNALVFEKLVAEYNSVQKLIGRLNRHYPAPVLQGLIYQSPISIEMMKEESAVENWGKSFVEQLTAKETEAHQYSVRTQFNAERQVYEAVITVRKHGIDTDYFLNFDFVHGNEYAKIVSLNKQLNGLLEEGAYVIRGEKVQPVRSFEQAVEWLVKESRKGLEVQRYKGLGEMNADQLWETTMDPNSRRMLKVSIKDAVAADQLFTTLMGDEVEPRREFIELNALRANLDV</sequence>